<proteinExistence type="inferred from homology"/>
<accession>P0A735</accession>
<accession>P18198</accession>
<reference key="1">
    <citation type="journal article" date="2002" name="Proc. Natl. Acad. Sci. U.S.A.">
        <title>Extensive mosaic structure revealed by the complete genome sequence of uropathogenic Escherichia coli.</title>
        <authorList>
            <person name="Welch R.A."/>
            <person name="Burland V."/>
            <person name="Plunkett G. III"/>
            <person name="Redford P."/>
            <person name="Roesch P."/>
            <person name="Rasko D."/>
            <person name="Buckles E.L."/>
            <person name="Liou S.-R."/>
            <person name="Boutin A."/>
            <person name="Hackett J."/>
            <person name="Stroud D."/>
            <person name="Mayhew G.F."/>
            <person name="Rose D.J."/>
            <person name="Zhou S."/>
            <person name="Schwartz D.C."/>
            <person name="Perna N.T."/>
            <person name="Mobley H.L.T."/>
            <person name="Donnenberg M.S."/>
            <person name="Blattner F.R."/>
        </authorList>
    </citation>
    <scope>NUCLEOTIDE SEQUENCE [LARGE SCALE GENOMIC DNA]</scope>
    <source>
        <strain>CFT073 / ATCC 700928 / UPEC</strain>
    </source>
</reference>
<keyword id="KW-0131">Cell cycle</keyword>
<keyword id="KW-0132">Cell division</keyword>
<keyword id="KW-1185">Reference proteome</keyword>
<organism>
    <name type="scientific">Escherichia coli O6:H1 (strain CFT073 / ATCC 700928 / UPEC)</name>
    <dbReference type="NCBI Taxonomy" id="199310"/>
    <lineage>
        <taxon>Bacteria</taxon>
        <taxon>Pseudomonadati</taxon>
        <taxon>Pseudomonadota</taxon>
        <taxon>Gammaproteobacteria</taxon>
        <taxon>Enterobacterales</taxon>
        <taxon>Enterobacteriaceae</taxon>
        <taxon>Escherichia</taxon>
    </lineage>
</organism>
<comment type="function">
    <text evidence="1">Prevents the cell division inhibition by proteins MinC and MinD at internal division sites while permitting inhibition at polar sites. This ensures cell division at the proper site by restricting the formation of a division septum at the midpoint of the long axis of the cell (By similarity).</text>
</comment>
<comment type="similarity">
    <text evidence="2">Belongs to the MinE family.</text>
</comment>
<feature type="chain" id="PRO_0000205875" description="Cell division topological specificity factor">
    <location>
        <begin position="1"/>
        <end position="88"/>
    </location>
</feature>
<protein>
    <recommendedName>
        <fullName>Cell division topological specificity factor</fullName>
    </recommendedName>
</protein>
<sequence>MALLDFFLSRKKNTANIAKERLQIIVAERRRSDAEPHYLPQLRKDILEVICKYVQIDPEMVTVQLEQKDGDISILELNVTLPEAEELK</sequence>
<evidence type="ECO:0000250" key="1"/>
<evidence type="ECO:0000305" key="2"/>
<dbReference type="EMBL" id="AE014075">
    <property type="protein sequence ID" value="AAN80086.1"/>
    <property type="molecule type" value="Genomic_DNA"/>
</dbReference>
<dbReference type="RefSeq" id="WP_001185665.1">
    <property type="nucleotide sequence ID" value="NZ_CP051263.1"/>
</dbReference>
<dbReference type="SMR" id="P0A735"/>
<dbReference type="STRING" id="199310.c1621"/>
<dbReference type="GeneID" id="93776260"/>
<dbReference type="KEGG" id="ecc:c1621"/>
<dbReference type="eggNOG" id="COG0851">
    <property type="taxonomic scope" value="Bacteria"/>
</dbReference>
<dbReference type="HOGENOM" id="CLU_137929_2_2_6"/>
<dbReference type="BioCyc" id="ECOL199310:C1621-MONOMER"/>
<dbReference type="Proteomes" id="UP000001410">
    <property type="component" value="Chromosome"/>
</dbReference>
<dbReference type="GO" id="GO:0051301">
    <property type="term" value="P:cell division"/>
    <property type="evidence" value="ECO:0007669"/>
    <property type="project" value="UniProtKB-KW"/>
</dbReference>
<dbReference type="GO" id="GO:0032955">
    <property type="term" value="P:regulation of division septum assembly"/>
    <property type="evidence" value="ECO:0007669"/>
    <property type="project" value="InterPro"/>
</dbReference>
<dbReference type="FunFam" id="3.30.1070.10:FF:000001">
    <property type="entry name" value="Cell division topological specificity factor"/>
    <property type="match status" value="1"/>
</dbReference>
<dbReference type="Gene3D" id="3.30.1070.10">
    <property type="entry name" value="Cell division topological specificity factor MinE"/>
    <property type="match status" value="1"/>
</dbReference>
<dbReference type="HAMAP" id="MF_00262">
    <property type="entry name" value="MinE"/>
    <property type="match status" value="1"/>
</dbReference>
<dbReference type="InterPro" id="IPR005527">
    <property type="entry name" value="MinE"/>
</dbReference>
<dbReference type="InterPro" id="IPR036707">
    <property type="entry name" value="MinE_sf"/>
</dbReference>
<dbReference type="NCBIfam" id="TIGR01215">
    <property type="entry name" value="minE"/>
    <property type="match status" value="1"/>
</dbReference>
<dbReference type="NCBIfam" id="NF001422">
    <property type="entry name" value="PRK00296.1"/>
    <property type="match status" value="1"/>
</dbReference>
<dbReference type="Pfam" id="PF03776">
    <property type="entry name" value="MinE"/>
    <property type="match status" value="1"/>
</dbReference>
<dbReference type="SUPFAM" id="SSF55229">
    <property type="entry name" value="Cell division protein MinE topological specificity domain"/>
    <property type="match status" value="1"/>
</dbReference>
<name>MINE_ECOL6</name>
<gene>
    <name type="primary">minE</name>
    <name type="ordered locus">c1621</name>
</gene>